<keyword id="KW-1185">Reference proteome</keyword>
<keyword id="KW-0687">Ribonucleoprotein</keyword>
<keyword id="KW-0689">Ribosomal protein</keyword>
<keyword id="KW-0694">RNA-binding</keyword>
<keyword id="KW-0699">rRNA-binding</keyword>
<sequence>MSFKFEAEVRSAQGKGASRRLRHNGQVPAIIYGGNAEPVSIILDHDKVNNVQIHDAFYNEVLTIVLAEKEVQVKVQAIQRHPTKPKLLHLDFKRV</sequence>
<comment type="function">
    <text evidence="1">This is one of the proteins that binds to the 5S RNA in the ribosome where it forms part of the central protuberance.</text>
</comment>
<comment type="subunit">
    <text evidence="1">Part of the 50S ribosomal subunit; part of the 5S rRNA/L5/L18/L25 subcomplex. Contacts the 5S rRNA. Binds to the 5S rRNA independently of L5 and L18.</text>
</comment>
<comment type="similarity">
    <text evidence="1">Belongs to the bacterial ribosomal protein bL25 family.</text>
</comment>
<name>RL25_HAEDU</name>
<organism>
    <name type="scientific">Haemophilus ducreyi (strain 35000HP / ATCC 700724)</name>
    <dbReference type="NCBI Taxonomy" id="233412"/>
    <lineage>
        <taxon>Bacteria</taxon>
        <taxon>Pseudomonadati</taxon>
        <taxon>Pseudomonadota</taxon>
        <taxon>Gammaproteobacteria</taxon>
        <taxon>Pasteurellales</taxon>
        <taxon>Pasteurellaceae</taxon>
        <taxon>Haemophilus</taxon>
    </lineage>
</organism>
<proteinExistence type="inferred from homology"/>
<accession>Q7VLY6</accession>
<dbReference type="EMBL" id="AE017143">
    <property type="protein sequence ID" value="AAP96084.1"/>
    <property type="molecule type" value="Genomic_DNA"/>
</dbReference>
<dbReference type="RefSeq" id="WP_010945133.1">
    <property type="nucleotide sequence ID" value="NC_002940.2"/>
</dbReference>
<dbReference type="SMR" id="Q7VLY6"/>
<dbReference type="STRING" id="233412.HD_1249"/>
<dbReference type="GeneID" id="60734150"/>
<dbReference type="KEGG" id="hdu:HD_1249"/>
<dbReference type="eggNOG" id="COG1825">
    <property type="taxonomic scope" value="Bacteria"/>
</dbReference>
<dbReference type="HOGENOM" id="CLU_137946_0_0_6"/>
<dbReference type="OrthoDB" id="9806411at2"/>
<dbReference type="Proteomes" id="UP000001022">
    <property type="component" value="Chromosome"/>
</dbReference>
<dbReference type="GO" id="GO:0022625">
    <property type="term" value="C:cytosolic large ribosomal subunit"/>
    <property type="evidence" value="ECO:0007669"/>
    <property type="project" value="TreeGrafter"/>
</dbReference>
<dbReference type="GO" id="GO:0008097">
    <property type="term" value="F:5S rRNA binding"/>
    <property type="evidence" value="ECO:0007669"/>
    <property type="project" value="InterPro"/>
</dbReference>
<dbReference type="GO" id="GO:0003735">
    <property type="term" value="F:structural constituent of ribosome"/>
    <property type="evidence" value="ECO:0007669"/>
    <property type="project" value="InterPro"/>
</dbReference>
<dbReference type="GO" id="GO:0006412">
    <property type="term" value="P:translation"/>
    <property type="evidence" value="ECO:0007669"/>
    <property type="project" value="UniProtKB-UniRule"/>
</dbReference>
<dbReference type="CDD" id="cd00495">
    <property type="entry name" value="Ribosomal_L25_TL5_CTC"/>
    <property type="match status" value="1"/>
</dbReference>
<dbReference type="FunFam" id="2.40.240.10:FF:000002">
    <property type="entry name" value="50S ribosomal protein L25"/>
    <property type="match status" value="1"/>
</dbReference>
<dbReference type="Gene3D" id="2.40.240.10">
    <property type="entry name" value="Ribosomal Protein L25, Chain P"/>
    <property type="match status" value="1"/>
</dbReference>
<dbReference type="HAMAP" id="MF_01336">
    <property type="entry name" value="Ribosomal_bL25"/>
    <property type="match status" value="1"/>
</dbReference>
<dbReference type="InterPro" id="IPR020056">
    <property type="entry name" value="Rbsml_bL25/Gln-tRNA_synth_N"/>
</dbReference>
<dbReference type="InterPro" id="IPR011035">
    <property type="entry name" value="Ribosomal_bL25/Gln-tRNA_synth"/>
</dbReference>
<dbReference type="InterPro" id="IPR020055">
    <property type="entry name" value="Ribosomal_bL25_short"/>
</dbReference>
<dbReference type="InterPro" id="IPR029751">
    <property type="entry name" value="Ribosomal_L25_dom"/>
</dbReference>
<dbReference type="InterPro" id="IPR020930">
    <property type="entry name" value="Ribosomal_uL5_bac-type"/>
</dbReference>
<dbReference type="NCBIfam" id="NF004612">
    <property type="entry name" value="PRK05943.1"/>
    <property type="match status" value="1"/>
</dbReference>
<dbReference type="PANTHER" id="PTHR33284">
    <property type="entry name" value="RIBOSOMAL PROTEIN L25/GLN-TRNA SYNTHETASE, ANTI-CODON-BINDING DOMAIN-CONTAINING PROTEIN"/>
    <property type="match status" value="1"/>
</dbReference>
<dbReference type="PANTHER" id="PTHR33284:SF1">
    <property type="entry name" value="RIBOSOMAL PROTEIN L25_GLN-TRNA SYNTHETASE, ANTI-CODON-BINDING DOMAIN-CONTAINING PROTEIN"/>
    <property type="match status" value="1"/>
</dbReference>
<dbReference type="Pfam" id="PF01386">
    <property type="entry name" value="Ribosomal_L25p"/>
    <property type="match status" value="1"/>
</dbReference>
<dbReference type="SUPFAM" id="SSF50715">
    <property type="entry name" value="Ribosomal protein L25-like"/>
    <property type="match status" value="1"/>
</dbReference>
<protein>
    <recommendedName>
        <fullName evidence="1">Large ribosomal subunit protein bL25</fullName>
    </recommendedName>
    <alternativeName>
        <fullName evidence="2">50S ribosomal protein L25</fullName>
    </alternativeName>
</protein>
<evidence type="ECO:0000255" key="1">
    <source>
        <dbReference type="HAMAP-Rule" id="MF_01336"/>
    </source>
</evidence>
<evidence type="ECO:0000305" key="2"/>
<feature type="chain" id="PRO_0000181483" description="Large ribosomal subunit protein bL25">
    <location>
        <begin position="1"/>
        <end position="95"/>
    </location>
</feature>
<reference key="1">
    <citation type="submission" date="2003-06" db="EMBL/GenBank/DDBJ databases">
        <title>The complete genome sequence of Haemophilus ducreyi.</title>
        <authorList>
            <person name="Munson R.S. Jr."/>
            <person name="Ray W.C."/>
            <person name="Mahairas G."/>
            <person name="Sabo P."/>
            <person name="Mungur R."/>
            <person name="Johnson L."/>
            <person name="Nguyen D."/>
            <person name="Wang J."/>
            <person name="Forst C."/>
            <person name="Hood L."/>
        </authorList>
    </citation>
    <scope>NUCLEOTIDE SEQUENCE [LARGE SCALE GENOMIC DNA]</scope>
    <source>
        <strain>35000HP / ATCC 700724</strain>
    </source>
</reference>
<gene>
    <name evidence="1" type="primary">rplY</name>
    <name type="ordered locus">HD_1249</name>
</gene>